<sequence>MTETQSLELAKALISRPSVTPDDRDCQKLLAERLHKIGFAAEELHFGDTKNIWLRRGTKAPVVCFAGHTDVVPTGPVEKWDSPPFEPTERDGRLYGRGAADMKTSIACFVTACERFVAEHPDHQGSIALLITSDEEGDALDGTTKVVDVLKARGELIDYCIVGEPTAVDKLGDMIKNGRRGSLSGSLTVKGKQGHIAYPHLAVNPIHTFAPALLELTQEIWDEGNEYFPPTSFQISNINGGTGATNVIPGELNVKFNFRFSTESTETGLKQRVHAILDKHGVQYDLQWSCSGQPFLTHAGKLTDVARTAIAETCGVEAELSTTGGTSDGRFIKAIAKELIELGPSNATIHQINENVRLDDIPKLSAVYERILARLLAEKAV</sequence>
<feature type="chain" id="PRO_0000375621" description="Succinyl-diaminopimelate desuccinylase">
    <location>
        <begin position="1"/>
        <end position="381"/>
    </location>
</feature>
<feature type="active site" evidence="1">
    <location>
        <position position="70"/>
    </location>
</feature>
<feature type="active site" description="Proton acceptor" evidence="1">
    <location>
        <position position="135"/>
    </location>
</feature>
<feature type="binding site" evidence="1">
    <location>
        <position position="68"/>
    </location>
    <ligand>
        <name>Zn(2+)</name>
        <dbReference type="ChEBI" id="CHEBI:29105"/>
        <label>1</label>
    </ligand>
</feature>
<feature type="binding site" evidence="1">
    <location>
        <position position="101"/>
    </location>
    <ligand>
        <name>Zn(2+)</name>
        <dbReference type="ChEBI" id="CHEBI:29105"/>
        <label>1</label>
    </ligand>
</feature>
<feature type="binding site" evidence="1">
    <location>
        <position position="101"/>
    </location>
    <ligand>
        <name>Zn(2+)</name>
        <dbReference type="ChEBI" id="CHEBI:29105"/>
        <label>2</label>
    </ligand>
</feature>
<feature type="binding site" evidence="1">
    <location>
        <position position="136"/>
    </location>
    <ligand>
        <name>Zn(2+)</name>
        <dbReference type="ChEBI" id="CHEBI:29105"/>
        <label>2</label>
    </ligand>
</feature>
<feature type="binding site" evidence="1">
    <location>
        <position position="164"/>
    </location>
    <ligand>
        <name>Zn(2+)</name>
        <dbReference type="ChEBI" id="CHEBI:29105"/>
        <label>1</label>
    </ligand>
</feature>
<feature type="binding site" evidence="1">
    <location>
        <position position="350"/>
    </location>
    <ligand>
        <name>Zn(2+)</name>
        <dbReference type="ChEBI" id="CHEBI:29105"/>
        <label>2</label>
    </ligand>
</feature>
<proteinExistence type="inferred from homology"/>
<organism>
    <name type="scientific">Neisseria gonorrhoeae (strain ATCC 700825 / FA 1090)</name>
    <dbReference type="NCBI Taxonomy" id="242231"/>
    <lineage>
        <taxon>Bacteria</taxon>
        <taxon>Pseudomonadati</taxon>
        <taxon>Pseudomonadota</taxon>
        <taxon>Betaproteobacteria</taxon>
        <taxon>Neisseriales</taxon>
        <taxon>Neisseriaceae</taxon>
        <taxon>Neisseria</taxon>
    </lineage>
</organism>
<reference key="1">
    <citation type="submission" date="2003-03" db="EMBL/GenBank/DDBJ databases">
        <title>The complete genome sequence of Neisseria gonorrhoeae.</title>
        <authorList>
            <person name="Lewis L.A."/>
            <person name="Gillaspy A.F."/>
            <person name="McLaughlin R.E."/>
            <person name="Gipson M."/>
            <person name="Ducey T.F."/>
            <person name="Ownbey T."/>
            <person name="Hartman K."/>
            <person name="Nydick C."/>
            <person name="Carson M.B."/>
            <person name="Vaughn J."/>
            <person name="Thomson C."/>
            <person name="Song L."/>
            <person name="Lin S."/>
            <person name="Yuan X."/>
            <person name="Najar F."/>
            <person name="Zhan M."/>
            <person name="Ren Q."/>
            <person name="Zhu H."/>
            <person name="Qi S."/>
            <person name="Kenton S.M."/>
            <person name="Lai H."/>
            <person name="White J.D."/>
            <person name="Clifton S."/>
            <person name="Roe B.A."/>
            <person name="Dyer D.W."/>
        </authorList>
    </citation>
    <scope>NUCLEOTIDE SEQUENCE [LARGE SCALE GENOMIC DNA]</scope>
    <source>
        <strain>ATCC 700825 / FA 1090</strain>
    </source>
</reference>
<dbReference type="EC" id="3.5.1.18" evidence="1"/>
<dbReference type="EMBL" id="AE004969">
    <property type="protein sequence ID" value="AAW89675.1"/>
    <property type="molecule type" value="Genomic_DNA"/>
</dbReference>
<dbReference type="RefSeq" id="WP_003688278.1">
    <property type="nucleotide sequence ID" value="NC_002946.2"/>
</dbReference>
<dbReference type="RefSeq" id="YP_208087.1">
    <property type="nucleotide sequence ID" value="NC_002946.2"/>
</dbReference>
<dbReference type="SMR" id="Q5F812"/>
<dbReference type="STRING" id="242231.NGO_0991"/>
<dbReference type="KEGG" id="ngo:NGO_0991"/>
<dbReference type="PATRIC" id="fig|242231.10.peg.1161"/>
<dbReference type="HOGENOM" id="CLU_021802_4_0_4"/>
<dbReference type="UniPathway" id="UPA00034">
    <property type="reaction ID" value="UER00021"/>
</dbReference>
<dbReference type="Proteomes" id="UP000000535">
    <property type="component" value="Chromosome"/>
</dbReference>
<dbReference type="GO" id="GO:0008777">
    <property type="term" value="F:acetylornithine deacetylase activity"/>
    <property type="evidence" value="ECO:0007669"/>
    <property type="project" value="TreeGrafter"/>
</dbReference>
<dbReference type="GO" id="GO:0050897">
    <property type="term" value="F:cobalt ion binding"/>
    <property type="evidence" value="ECO:0007669"/>
    <property type="project" value="UniProtKB-UniRule"/>
</dbReference>
<dbReference type="GO" id="GO:0009014">
    <property type="term" value="F:succinyl-diaminopimelate desuccinylase activity"/>
    <property type="evidence" value="ECO:0007669"/>
    <property type="project" value="UniProtKB-UniRule"/>
</dbReference>
<dbReference type="GO" id="GO:0008270">
    <property type="term" value="F:zinc ion binding"/>
    <property type="evidence" value="ECO:0007669"/>
    <property type="project" value="UniProtKB-UniRule"/>
</dbReference>
<dbReference type="GO" id="GO:0019877">
    <property type="term" value="P:diaminopimelate biosynthetic process"/>
    <property type="evidence" value="ECO:0007669"/>
    <property type="project" value="UniProtKB-UniRule"/>
</dbReference>
<dbReference type="GO" id="GO:0006526">
    <property type="term" value="P:L-arginine biosynthetic process"/>
    <property type="evidence" value="ECO:0007669"/>
    <property type="project" value="TreeGrafter"/>
</dbReference>
<dbReference type="GO" id="GO:0009089">
    <property type="term" value="P:lysine biosynthetic process via diaminopimelate"/>
    <property type="evidence" value="ECO:0007669"/>
    <property type="project" value="UniProtKB-UniRule"/>
</dbReference>
<dbReference type="CDD" id="cd03891">
    <property type="entry name" value="M20_DapE_proteobac"/>
    <property type="match status" value="1"/>
</dbReference>
<dbReference type="FunFam" id="3.40.630.10:FF:000005">
    <property type="entry name" value="Succinyl-diaminopimelate desuccinylase"/>
    <property type="match status" value="1"/>
</dbReference>
<dbReference type="FunFam" id="3.40.630.10:FF:000010">
    <property type="entry name" value="Succinyl-diaminopimelate desuccinylase"/>
    <property type="match status" value="1"/>
</dbReference>
<dbReference type="Gene3D" id="3.40.630.10">
    <property type="entry name" value="Zn peptidases"/>
    <property type="match status" value="2"/>
</dbReference>
<dbReference type="HAMAP" id="MF_01690">
    <property type="entry name" value="DapE"/>
    <property type="match status" value="1"/>
</dbReference>
<dbReference type="InterPro" id="IPR036264">
    <property type="entry name" value="Bact_exopeptidase_dim_dom"/>
</dbReference>
<dbReference type="InterPro" id="IPR005941">
    <property type="entry name" value="DapE_proteobac"/>
</dbReference>
<dbReference type="InterPro" id="IPR002933">
    <property type="entry name" value="Peptidase_M20"/>
</dbReference>
<dbReference type="InterPro" id="IPR011650">
    <property type="entry name" value="Peptidase_M20_dimer"/>
</dbReference>
<dbReference type="InterPro" id="IPR050072">
    <property type="entry name" value="Peptidase_M20A"/>
</dbReference>
<dbReference type="NCBIfam" id="TIGR01246">
    <property type="entry name" value="dapE_proteo"/>
    <property type="match status" value="1"/>
</dbReference>
<dbReference type="NCBIfam" id="NF009557">
    <property type="entry name" value="PRK13009.1"/>
    <property type="match status" value="1"/>
</dbReference>
<dbReference type="PANTHER" id="PTHR43808">
    <property type="entry name" value="ACETYLORNITHINE DEACETYLASE"/>
    <property type="match status" value="1"/>
</dbReference>
<dbReference type="PANTHER" id="PTHR43808:SF31">
    <property type="entry name" value="N-ACETYL-L-CITRULLINE DEACETYLASE"/>
    <property type="match status" value="1"/>
</dbReference>
<dbReference type="Pfam" id="PF07687">
    <property type="entry name" value="M20_dimer"/>
    <property type="match status" value="1"/>
</dbReference>
<dbReference type="Pfam" id="PF01546">
    <property type="entry name" value="Peptidase_M20"/>
    <property type="match status" value="1"/>
</dbReference>
<dbReference type="SUPFAM" id="SSF55031">
    <property type="entry name" value="Bacterial exopeptidase dimerisation domain"/>
    <property type="match status" value="1"/>
</dbReference>
<dbReference type="SUPFAM" id="SSF53187">
    <property type="entry name" value="Zn-dependent exopeptidases"/>
    <property type="match status" value="1"/>
</dbReference>
<gene>
    <name evidence="1" type="primary">dapE</name>
    <name type="ordered locus">NGO_0991</name>
</gene>
<comment type="function">
    <text evidence="1">Catalyzes the hydrolysis of N-succinyl-L,L-diaminopimelic acid (SDAP), forming succinate and LL-2,6-diaminopimelate (DAP), an intermediate involved in the bacterial biosynthesis of lysine and meso-diaminopimelic acid, an essential component of bacterial cell walls.</text>
</comment>
<comment type="catalytic activity">
    <reaction evidence="1">
        <text>N-succinyl-(2S,6S)-2,6-diaminopimelate + H2O = (2S,6S)-2,6-diaminopimelate + succinate</text>
        <dbReference type="Rhea" id="RHEA:22608"/>
        <dbReference type="ChEBI" id="CHEBI:15377"/>
        <dbReference type="ChEBI" id="CHEBI:30031"/>
        <dbReference type="ChEBI" id="CHEBI:57609"/>
        <dbReference type="ChEBI" id="CHEBI:58087"/>
        <dbReference type="EC" id="3.5.1.18"/>
    </reaction>
</comment>
<comment type="cofactor">
    <cofactor evidence="1">
        <name>Zn(2+)</name>
        <dbReference type="ChEBI" id="CHEBI:29105"/>
    </cofactor>
    <cofactor evidence="1">
        <name>Co(2+)</name>
        <dbReference type="ChEBI" id="CHEBI:48828"/>
    </cofactor>
    <text evidence="1">Binds 2 Zn(2+) or Co(2+) ions per subunit.</text>
</comment>
<comment type="pathway">
    <text evidence="1">Amino-acid biosynthesis; L-lysine biosynthesis via DAP pathway; LL-2,6-diaminopimelate from (S)-tetrahydrodipicolinate (succinylase route): step 3/3.</text>
</comment>
<comment type="subunit">
    <text evidence="1">Homodimer.</text>
</comment>
<comment type="similarity">
    <text evidence="1">Belongs to the peptidase M20A family. DapE subfamily.</text>
</comment>
<keyword id="KW-0028">Amino-acid biosynthesis</keyword>
<keyword id="KW-0170">Cobalt</keyword>
<keyword id="KW-0220">Diaminopimelate biosynthesis</keyword>
<keyword id="KW-0378">Hydrolase</keyword>
<keyword id="KW-0457">Lysine biosynthesis</keyword>
<keyword id="KW-0479">Metal-binding</keyword>
<keyword id="KW-1185">Reference proteome</keyword>
<keyword id="KW-0862">Zinc</keyword>
<accession>Q5F812</accession>
<protein>
    <recommendedName>
        <fullName evidence="1">Succinyl-diaminopimelate desuccinylase</fullName>
        <shortName evidence="1">SDAP desuccinylase</shortName>
        <ecNumber evidence="1">3.5.1.18</ecNumber>
    </recommendedName>
    <alternativeName>
        <fullName evidence="1">N-succinyl-LL-2,6-diaminoheptanedioate amidohydrolase</fullName>
    </alternativeName>
</protein>
<evidence type="ECO:0000255" key="1">
    <source>
        <dbReference type="HAMAP-Rule" id="MF_01690"/>
    </source>
</evidence>
<name>DAPE_NEIG1</name>